<gene>
    <name evidence="1" type="primary">psbK</name>
</gene>
<keyword id="KW-0150">Chloroplast</keyword>
<keyword id="KW-0472">Membrane</keyword>
<keyword id="KW-0602">Photosynthesis</keyword>
<keyword id="KW-0604">Photosystem II</keyword>
<keyword id="KW-0934">Plastid</keyword>
<keyword id="KW-0674">Reaction center</keyword>
<keyword id="KW-0793">Thylakoid</keyword>
<keyword id="KW-0812">Transmembrane</keyword>
<keyword id="KW-1133">Transmembrane helix</keyword>
<accession>Q32RW6</accession>
<comment type="function">
    <text evidence="1">One of the components of the core complex of photosystem II (PSII). PSII is a light-driven water:plastoquinone oxidoreductase that uses light energy to abstract electrons from H(2)O, generating O(2) and a proton gradient subsequently used for ATP formation. It consists of a core antenna complex that captures photons, and an electron transfer chain that converts photonic excitation into a charge separation.</text>
</comment>
<comment type="subunit">
    <text evidence="1">PSII is composed of 1 copy each of membrane proteins PsbA, PsbB, PsbC, PsbD, PsbE, PsbF, PsbH, PsbI, PsbJ, PsbK, PsbL, PsbM, PsbT, PsbX, PsbY, PsbZ, Psb30/Ycf12, at least 3 peripheral proteins of the oxygen-evolving complex and a large number of cofactors. It forms dimeric complexes.</text>
</comment>
<comment type="subcellular location">
    <subcellularLocation>
        <location evidence="1">Plastid</location>
        <location evidence="1">Chloroplast thylakoid membrane</location>
        <topology evidence="1">Single-pass membrane protein</topology>
    </subcellularLocation>
</comment>
<comment type="similarity">
    <text evidence="1">Belongs to the PsbK family.</text>
</comment>
<geneLocation type="chloroplast"/>
<reference key="1">
    <citation type="journal article" date="2005" name="BMC Biol.">
        <title>The complete chloroplast DNA sequences of the charophycean green algae Staurastrum and Zygnema reveal that the chloroplast genome underwent extensive changes during the evolution of the Zygnematales.</title>
        <authorList>
            <person name="Turmel M."/>
            <person name="Otis C."/>
            <person name="Lemieux C."/>
        </authorList>
    </citation>
    <scope>NUCLEOTIDE SEQUENCE [LARGE SCALE GENOMIC DNA]</scope>
</reference>
<dbReference type="EMBL" id="AY958085">
    <property type="protein sequence ID" value="AAX45730.1"/>
    <property type="molecule type" value="Genomic_DNA"/>
</dbReference>
<dbReference type="RefSeq" id="YP_636410.1">
    <property type="nucleotide sequence ID" value="NC_008116.1"/>
</dbReference>
<dbReference type="SMR" id="Q32RW6"/>
<dbReference type="GeneID" id="4108689"/>
<dbReference type="GO" id="GO:0009535">
    <property type="term" value="C:chloroplast thylakoid membrane"/>
    <property type="evidence" value="ECO:0007669"/>
    <property type="project" value="UniProtKB-SubCell"/>
</dbReference>
<dbReference type="GO" id="GO:0009539">
    <property type="term" value="C:photosystem II reaction center"/>
    <property type="evidence" value="ECO:0007669"/>
    <property type="project" value="InterPro"/>
</dbReference>
<dbReference type="GO" id="GO:0015979">
    <property type="term" value="P:photosynthesis"/>
    <property type="evidence" value="ECO:0007669"/>
    <property type="project" value="UniProtKB-UniRule"/>
</dbReference>
<dbReference type="HAMAP" id="MF_00441">
    <property type="entry name" value="PSII_PsbK"/>
    <property type="match status" value="1"/>
</dbReference>
<dbReference type="InterPro" id="IPR003687">
    <property type="entry name" value="PSII_PsbK"/>
</dbReference>
<dbReference type="InterPro" id="IPR037270">
    <property type="entry name" value="PSII_PsbK_sf"/>
</dbReference>
<dbReference type="NCBIfam" id="NF002715">
    <property type="entry name" value="PRK02553.1"/>
    <property type="match status" value="1"/>
</dbReference>
<dbReference type="PANTHER" id="PTHR35325">
    <property type="match status" value="1"/>
</dbReference>
<dbReference type="PANTHER" id="PTHR35325:SF1">
    <property type="entry name" value="PHOTOSYSTEM II REACTION CENTER PROTEIN K"/>
    <property type="match status" value="1"/>
</dbReference>
<dbReference type="Pfam" id="PF02533">
    <property type="entry name" value="PsbK"/>
    <property type="match status" value="1"/>
</dbReference>
<dbReference type="SUPFAM" id="SSF161037">
    <property type="entry name" value="Photosystem II reaction center protein K, PsbK"/>
    <property type="match status" value="1"/>
</dbReference>
<organism>
    <name type="scientific">Staurastrum punctulatum</name>
    <name type="common">Green alga</name>
    <name type="synonym">Cosmoastrum punctulatum</name>
    <dbReference type="NCBI Taxonomy" id="102822"/>
    <lineage>
        <taxon>Eukaryota</taxon>
        <taxon>Viridiplantae</taxon>
        <taxon>Streptophyta</taxon>
        <taxon>Zygnematophyceae</taxon>
        <taxon>Zygnematophycidae</taxon>
        <taxon>Desmidiales</taxon>
        <taxon>Desmidiaceae</taxon>
        <taxon>Staurastrum</taxon>
    </lineage>
</organism>
<feature type="propeptide" id="PRO_0000276184" evidence="1">
    <location>
        <begin position="1"/>
        <end position="21"/>
    </location>
</feature>
<feature type="chain" id="PRO_0000276185" description="Photosystem II reaction center protein K" evidence="1">
    <location>
        <begin position="22"/>
        <end position="58"/>
    </location>
</feature>
<feature type="transmembrane region" description="Helical" evidence="1">
    <location>
        <begin position="29"/>
        <end position="49"/>
    </location>
</feature>
<sequence>MFNAYLDTVLDLSANGTVILAKLPEAYAIFDPIVDVMPIIPVFFLLLAFVWQAAVSFR</sequence>
<name>PSBK_STAPU</name>
<protein>
    <recommendedName>
        <fullName evidence="1">Photosystem II reaction center protein K</fullName>
        <shortName evidence="1">PSII-K</shortName>
    </recommendedName>
</protein>
<proteinExistence type="inferred from homology"/>
<evidence type="ECO:0000255" key="1">
    <source>
        <dbReference type="HAMAP-Rule" id="MF_00441"/>
    </source>
</evidence>